<evidence type="ECO:0000255" key="1">
    <source>
        <dbReference type="HAMAP-Rule" id="MF_01350"/>
    </source>
</evidence>
<feature type="chain" id="PRO_0000298833" description="NADH-quinone oxidoreductase subunit H">
    <location>
        <begin position="1"/>
        <end position="365"/>
    </location>
</feature>
<feature type="transmembrane region" description="Helical" evidence="1">
    <location>
        <begin position="27"/>
        <end position="47"/>
    </location>
</feature>
<feature type="transmembrane region" description="Helical" evidence="1">
    <location>
        <begin position="99"/>
        <end position="119"/>
    </location>
</feature>
<feature type="transmembrane region" description="Helical" evidence="1">
    <location>
        <begin position="133"/>
        <end position="153"/>
    </location>
</feature>
<feature type="transmembrane region" description="Helical" evidence="1">
    <location>
        <begin position="168"/>
        <end position="188"/>
    </location>
</feature>
<feature type="transmembrane region" description="Helical" evidence="1">
    <location>
        <begin position="206"/>
        <end position="226"/>
    </location>
</feature>
<feature type="transmembrane region" description="Helical" evidence="1">
    <location>
        <begin position="268"/>
        <end position="288"/>
    </location>
</feature>
<feature type="transmembrane region" description="Helical" evidence="1">
    <location>
        <begin position="294"/>
        <end position="314"/>
    </location>
</feature>
<feature type="transmembrane region" description="Helical" evidence="1">
    <location>
        <begin position="329"/>
        <end position="349"/>
    </location>
</feature>
<keyword id="KW-0997">Cell inner membrane</keyword>
<keyword id="KW-1003">Cell membrane</keyword>
<keyword id="KW-0472">Membrane</keyword>
<keyword id="KW-0520">NAD</keyword>
<keyword id="KW-0874">Quinone</keyword>
<keyword id="KW-1278">Translocase</keyword>
<keyword id="KW-0812">Transmembrane</keyword>
<keyword id="KW-1133">Transmembrane helix</keyword>
<keyword id="KW-0830">Ubiquinone</keyword>
<dbReference type="EC" id="7.1.1.-" evidence="1"/>
<dbReference type="EMBL" id="CP000450">
    <property type="protein sequence ID" value="ABI59189.1"/>
    <property type="molecule type" value="Genomic_DNA"/>
</dbReference>
<dbReference type="RefSeq" id="WP_011634013.1">
    <property type="nucleotide sequence ID" value="NC_008344.1"/>
</dbReference>
<dbReference type="SMR" id="Q0AHJ3"/>
<dbReference type="STRING" id="335283.Neut_0929"/>
<dbReference type="KEGG" id="net:Neut_0929"/>
<dbReference type="eggNOG" id="COG1005">
    <property type="taxonomic scope" value="Bacteria"/>
</dbReference>
<dbReference type="HOGENOM" id="CLU_015134_0_1_4"/>
<dbReference type="OrthoDB" id="9803734at2"/>
<dbReference type="Proteomes" id="UP000001966">
    <property type="component" value="Chromosome"/>
</dbReference>
<dbReference type="GO" id="GO:0005886">
    <property type="term" value="C:plasma membrane"/>
    <property type="evidence" value="ECO:0007669"/>
    <property type="project" value="UniProtKB-SubCell"/>
</dbReference>
<dbReference type="GO" id="GO:0003954">
    <property type="term" value="F:NADH dehydrogenase activity"/>
    <property type="evidence" value="ECO:0007669"/>
    <property type="project" value="TreeGrafter"/>
</dbReference>
<dbReference type="GO" id="GO:0016655">
    <property type="term" value="F:oxidoreductase activity, acting on NAD(P)H, quinone or similar compound as acceptor"/>
    <property type="evidence" value="ECO:0007669"/>
    <property type="project" value="UniProtKB-UniRule"/>
</dbReference>
<dbReference type="GO" id="GO:0048038">
    <property type="term" value="F:quinone binding"/>
    <property type="evidence" value="ECO:0007669"/>
    <property type="project" value="UniProtKB-KW"/>
</dbReference>
<dbReference type="GO" id="GO:0009060">
    <property type="term" value="P:aerobic respiration"/>
    <property type="evidence" value="ECO:0007669"/>
    <property type="project" value="TreeGrafter"/>
</dbReference>
<dbReference type="HAMAP" id="MF_01350">
    <property type="entry name" value="NDH1_NuoH"/>
    <property type="match status" value="1"/>
</dbReference>
<dbReference type="InterPro" id="IPR001694">
    <property type="entry name" value="NADH_UbQ_OxRdtase_su1/FPO"/>
</dbReference>
<dbReference type="InterPro" id="IPR018086">
    <property type="entry name" value="NADH_UbQ_OxRdtase_su1_CS"/>
</dbReference>
<dbReference type="NCBIfam" id="NF004741">
    <property type="entry name" value="PRK06076.1-2"/>
    <property type="match status" value="1"/>
</dbReference>
<dbReference type="PANTHER" id="PTHR11432">
    <property type="entry name" value="NADH DEHYDROGENASE SUBUNIT 1"/>
    <property type="match status" value="1"/>
</dbReference>
<dbReference type="PANTHER" id="PTHR11432:SF3">
    <property type="entry name" value="NADH-UBIQUINONE OXIDOREDUCTASE CHAIN 1"/>
    <property type="match status" value="1"/>
</dbReference>
<dbReference type="Pfam" id="PF00146">
    <property type="entry name" value="NADHdh"/>
    <property type="match status" value="1"/>
</dbReference>
<dbReference type="PROSITE" id="PS00668">
    <property type="entry name" value="COMPLEX1_ND1_2"/>
    <property type="match status" value="1"/>
</dbReference>
<reference key="1">
    <citation type="journal article" date="2007" name="Environ. Microbiol.">
        <title>Whole-genome analysis of the ammonia-oxidizing bacterium, Nitrosomonas eutropha C91: implications for niche adaptation.</title>
        <authorList>
            <person name="Stein L.Y."/>
            <person name="Arp D.J."/>
            <person name="Berube P.M."/>
            <person name="Chain P.S."/>
            <person name="Hauser L."/>
            <person name="Jetten M.S."/>
            <person name="Klotz M.G."/>
            <person name="Larimer F.W."/>
            <person name="Norton J.M."/>
            <person name="Op den Camp H.J.M."/>
            <person name="Shin M."/>
            <person name="Wei X."/>
        </authorList>
    </citation>
    <scope>NUCLEOTIDE SEQUENCE [LARGE SCALE GENOMIC DNA]</scope>
    <source>
        <strain>DSM 101675 / C91 / Nm57</strain>
    </source>
</reference>
<name>NUOH_NITEC</name>
<gene>
    <name evidence="1" type="primary">nuoH</name>
    <name type="ordered locus">Neut_0929</name>
</gene>
<accession>Q0AHJ3</accession>
<protein>
    <recommendedName>
        <fullName evidence="1">NADH-quinone oxidoreductase subunit H</fullName>
        <ecNumber evidence="1">7.1.1.-</ecNumber>
    </recommendedName>
    <alternativeName>
        <fullName evidence="1">NADH dehydrogenase I subunit H</fullName>
    </alternativeName>
    <alternativeName>
        <fullName evidence="1">NDH-1 subunit H</fullName>
    </alternativeName>
</protein>
<proteinExistence type="inferred from homology"/>
<comment type="function">
    <text evidence="1">NDH-1 shuttles electrons from NADH, via FMN and iron-sulfur (Fe-S) centers, to quinones in the respiratory chain. The immediate electron acceptor for the enzyme in this species is believed to be ubiquinone. Couples the redox reaction to proton translocation (for every two electrons transferred, four hydrogen ions are translocated across the cytoplasmic membrane), and thus conserves the redox energy in a proton gradient. This subunit may bind ubiquinone.</text>
</comment>
<comment type="catalytic activity">
    <reaction evidence="1">
        <text>a quinone + NADH + 5 H(+)(in) = a quinol + NAD(+) + 4 H(+)(out)</text>
        <dbReference type="Rhea" id="RHEA:57888"/>
        <dbReference type="ChEBI" id="CHEBI:15378"/>
        <dbReference type="ChEBI" id="CHEBI:24646"/>
        <dbReference type="ChEBI" id="CHEBI:57540"/>
        <dbReference type="ChEBI" id="CHEBI:57945"/>
        <dbReference type="ChEBI" id="CHEBI:132124"/>
    </reaction>
</comment>
<comment type="subunit">
    <text evidence="1">NDH-1 is composed of 14 different subunits. Subunits NuoA, H, J, K, L, M, N constitute the membrane sector of the complex.</text>
</comment>
<comment type="subcellular location">
    <subcellularLocation>
        <location evidence="1">Cell inner membrane</location>
        <topology evidence="1">Multi-pass membrane protein</topology>
    </subcellularLocation>
</comment>
<comment type="similarity">
    <text evidence="1">Belongs to the complex I subunit 1 family.</text>
</comment>
<organism>
    <name type="scientific">Nitrosomonas eutropha (strain DSM 101675 / C91 / Nm57)</name>
    <dbReference type="NCBI Taxonomy" id="335283"/>
    <lineage>
        <taxon>Bacteria</taxon>
        <taxon>Pseudomonadati</taxon>
        <taxon>Pseudomonadota</taxon>
        <taxon>Betaproteobacteria</taxon>
        <taxon>Nitrosomonadales</taxon>
        <taxon>Nitrosomonadaceae</taxon>
        <taxon>Nitrosomonas</taxon>
    </lineage>
</organism>
<sequence length="365" mass="40482">MDSFQPLFEQLFGSEWGVSLFLLAKNLLLILAIIIPLLLAVAYLTFAERKIIAFMQVRVGPNRVTFFGIPWLGGWGQPIADAVKAIMKEIIIPTGANKFLFLLAPILAITPALAAWAVVPFSPELVLADINAALLYILAMTSLGVYGVIIAGWASNSKYAFLGAMRSAAQVISYELAMGFALVCVLMMSSSLNLGDIVAGQQGGSFLNWYMIPLFPMFLVYFISGVAETNRLPFDVAEGESEIVAGFHVDYSGMAFTIFFLAEYANMILVATLASIMFLGGWLPPVDIIPFNLIPGVVWLLLKIAIMLFFFLWFRATFPRYRYDQIMRLGWKVFIPITLIWIVLLGAVMQLPEAALQSFPLNLWF</sequence>